<proteinExistence type="inferred from homology"/>
<accession>Q5ZXP4</accession>
<evidence type="ECO:0000255" key="1">
    <source>
        <dbReference type="HAMAP-Rule" id="MF_00580"/>
    </source>
</evidence>
<comment type="function">
    <text evidence="1">Together with the chaperonin GroEL, plays an essential role in assisting protein folding. The GroEL-GroES system forms a nano-cage that allows encapsulation of the non-native substrate proteins and provides a physical environment optimized to promote and accelerate protein folding. GroES binds to the apical surface of the GroEL ring, thereby capping the opening of the GroEL channel.</text>
</comment>
<comment type="subunit">
    <text evidence="1">Heptamer of 7 subunits arranged in a ring. Interacts with the chaperonin GroEL.</text>
</comment>
<comment type="subcellular location">
    <subcellularLocation>
        <location evidence="1">Cytoplasm</location>
    </subcellularLocation>
</comment>
<comment type="similarity">
    <text evidence="1">Belongs to the GroES chaperonin family.</text>
</comment>
<keyword id="KW-0143">Chaperone</keyword>
<keyword id="KW-0963">Cytoplasm</keyword>
<keyword id="KW-1185">Reference proteome</keyword>
<gene>
    <name evidence="1" type="primary">groES</name>
    <name evidence="1" type="synonym">groS</name>
    <name type="ordered locus">lpg0687</name>
</gene>
<feature type="chain" id="PRO_1000025291" description="Co-chaperonin GroES">
    <location>
        <begin position="1"/>
        <end position="96"/>
    </location>
</feature>
<protein>
    <recommendedName>
        <fullName evidence="1">Co-chaperonin GroES</fullName>
    </recommendedName>
    <alternativeName>
        <fullName evidence="1">10 kDa chaperonin</fullName>
    </alternativeName>
    <alternativeName>
        <fullName evidence="1">Chaperonin-10</fullName>
        <shortName evidence="1">Cpn10</shortName>
    </alternativeName>
</protein>
<name>CH10_LEGPH</name>
<dbReference type="EMBL" id="AE017354">
    <property type="protein sequence ID" value="AAU26776.1"/>
    <property type="molecule type" value="Genomic_DNA"/>
</dbReference>
<dbReference type="RefSeq" id="WP_010946424.1">
    <property type="nucleotide sequence ID" value="NC_002942.5"/>
</dbReference>
<dbReference type="RefSeq" id="YP_094723.1">
    <property type="nucleotide sequence ID" value="NC_002942.5"/>
</dbReference>
<dbReference type="SMR" id="Q5ZXP4"/>
<dbReference type="STRING" id="272624.lpg0687"/>
<dbReference type="PaxDb" id="272624-lpg0687"/>
<dbReference type="GeneID" id="57034680"/>
<dbReference type="KEGG" id="lpn:lpg0687"/>
<dbReference type="PATRIC" id="fig|272624.6.peg.708"/>
<dbReference type="eggNOG" id="COG0234">
    <property type="taxonomic scope" value="Bacteria"/>
</dbReference>
<dbReference type="HOGENOM" id="CLU_132825_2_0_6"/>
<dbReference type="OrthoDB" id="9806791at2"/>
<dbReference type="Proteomes" id="UP000000609">
    <property type="component" value="Chromosome"/>
</dbReference>
<dbReference type="GO" id="GO:0005737">
    <property type="term" value="C:cytoplasm"/>
    <property type="evidence" value="ECO:0007669"/>
    <property type="project" value="UniProtKB-SubCell"/>
</dbReference>
<dbReference type="GO" id="GO:0005524">
    <property type="term" value="F:ATP binding"/>
    <property type="evidence" value="ECO:0007669"/>
    <property type="project" value="InterPro"/>
</dbReference>
<dbReference type="GO" id="GO:0046872">
    <property type="term" value="F:metal ion binding"/>
    <property type="evidence" value="ECO:0007669"/>
    <property type="project" value="TreeGrafter"/>
</dbReference>
<dbReference type="GO" id="GO:0044183">
    <property type="term" value="F:protein folding chaperone"/>
    <property type="evidence" value="ECO:0007669"/>
    <property type="project" value="InterPro"/>
</dbReference>
<dbReference type="GO" id="GO:0051087">
    <property type="term" value="F:protein-folding chaperone binding"/>
    <property type="evidence" value="ECO:0007669"/>
    <property type="project" value="TreeGrafter"/>
</dbReference>
<dbReference type="GO" id="GO:0051082">
    <property type="term" value="F:unfolded protein binding"/>
    <property type="evidence" value="ECO:0007669"/>
    <property type="project" value="TreeGrafter"/>
</dbReference>
<dbReference type="GO" id="GO:0051085">
    <property type="term" value="P:chaperone cofactor-dependent protein refolding"/>
    <property type="evidence" value="ECO:0007669"/>
    <property type="project" value="TreeGrafter"/>
</dbReference>
<dbReference type="CDD" id="cd00320">
    <property type="entry name" value="cpn10"/>
    <property type="match status" value="1"/>
</dbReference>
<dbReference type="FunFam" id="2.30.33.40:FF:000001">
    <property type="entry name" value="10 kDa chaperonin"/>
    <property type="match status" value="1"/>
</dbReference>
<dbReference type="Gene3D" id="2.30.33.40">
    <property type="entry name" value="GroES chaperonin"/>
    <property type="match status" value="1"/>
</dbReference>
<dbReference type="HAMAP" id="MF_00580">
    <property type="entry name" value="CH10"/>
    <property type="match status" value="1"/>
</dbReference>
<dbReference type="InterPro" id="IPR020818">
    <property type="entry name" value="Chaperonin_GroES"/>
</dbReference>
<dbReference type="InterPro" id="IPR037124">
    <property type="entry name" value="Chaperonin_GroES_sf"/>
</dbReference>
<dbReference type="InterPro" id="IPR018369">
    <property type="entry name" value="Chaprnonin_Cpn10_CS"/>
</dbReference>
<dbReference type="InterPro" id="IPR011032">
    <property type="entry name" value="GroES-like_sf"/>
</dbReference>
<dbReference type="NCBIfam" id="NF001527">
    <property type="entry name" value="PRK00364.1-2"/>
    <property type="match status" value="1"/>
</dbReference>
<dbReference type="NCBIfam" id="NF001529">
    <property type="entry name" value="PRK00364.1-5"/>
    <property type="match status" value="1"/>
</dbReference>
<dbReference type="NCBIfam" id="NF001531">
    <property type="entry name" value="PRK00364.2-2"/>
    <property type="match status" value="1"/>
</dbReference>
<dbReference type="NCBIfam" id="NF001533">
    <property type="entry name" value="PRK00364.2-4"/>
    <property type="match status" value="1"/>
</dbReference>
<dbReference type="NCBIfam" id="NF001534">
    <property type="entry name" value="PRK00364.2-5"/>
    <property type="match status" value="1"/>
</dbReference>
<dbReference type="PANTHER" id="PTHR10772">
    <property type="entry name" value="10 KDA HEAT SHOCK PROTEIN"/>
    <property type="match status" value="1"/>
</dbReference>
<dbReference type="PANTHER" id="PTHR10772:SF58">
    <property type="entry name" value="CO-CHAPERONIN GROES"/>
    <property type="match status" value="1"/>
</dbReference>
<dbReference type="Pfam" id="PF00166">
    <property type="entry name" value="Cpn10"/>
    <property type="match status" value="1"/>
</dbReference>
<dbReference type="PRINTS" id="PR00297">
    <property type="entry name" value="CHAPERONIN10"/>
</dbReference>
<dbReference type="SMART" id="SM00883">
    <property type="entry name" value="Cpn10"/>
    <property type="match status" value="1"/>
</dbReference>
<dbReference type="SUPFAM" id="SSF50129">
    <property type="entry name" value="GroES-like"/>
    <property type="match status" value="1"/>
</dbReference>
<dbReference type="PROSITE" id="PS00681">
    <property type="entry name" value="CHAPERONINS_CPN10"/>
    <property type="match status" value="1"/>
</dbReference>
<sequence length="96" mass="10475">MKIRPLHDRVVVRRMEEERTTAGGIVIPDSATEKPMRGEIIAVGAGKVLENGDVRALAVKVGDVVLFGKYSGTEVKVDGKELVVMREDDIMGVIEK</sequence>
<reference key="1">
    <citation type="journal article" date="2004" name="Science">
        <title>The genomic sequence of the accidental pathogen Legionella pneumophila.</title>
        <authorList>
            <person name="Chien M."/>
            <person name="Morozova I."/>
            <person name="Shi S."/>
            <person name="Sheng H."/>
            <person name="Chen J."/>
            <person name="Gomez S.M."/>
            <person name="Asamani G."/>
            <person name="Hill K."/>
            <person name="Nuara J."/>
            <person name="Feder M."/>
            <person name="Rineer J."/>
            <person name="Greenberg J.J."/>
            <person name="Steshenko V."/>
            <person name="Park S.H."/>
            <person name="Zhao B."/>
            <person name="Teplitskaya E."/>
            <person name="Edwards J.R."/>
            <person name="Pampou S."/>
            <person name="Georghiou A."/>
            <person name="Chou I.-C."/>
            <person name="Iannuccilli W."/>
            <person name="Ulz M.E."/>
            <person name="Kim D.H."/>
            <person name="Geringer-Sameth A."/>
            <person name="Goldsberry C."/>
            <person name="Morozov P."/>
            <person name="Fischer S.G."/>
            <person name="Segal G."/>
            <person name="Qu X."/>
            <person name="Rzhetsky A."/>
            <person name="Zhang P."/>
            <person name="Cayanis E."/>
            <person name="De Jong P.J."/>
            <person name="Ju J."/>
            <person name="Kalachikov S."/>
            <person name="Shuman H.A."/>
            <person name="Russo J.J."/>
        </authorList>
    </citation>
    <scope>NUCLEOTIDE SEQUENCE [LARGE SCALE GENOMIC DNA]</scope>
    <source>
        <strain>Philadelphia 1 / ATCC 33152 / DSM 7513</strain>
    </source>
</reference>
<organism>
    <name type="scientific">Legionella pneumophila subsp. pneumophila (strain Philadelphia 1 / ATCC 33152 / DSM 7513)</name>
    <dbReference type="NCBI Taxonomy" id="272624"/>
    <lineage>
        <taxon>Bacteria</taxon>
        <taxon>Pseudomonadati</taxon>
        <taxon>Pseudomonadota</taxon>
        <taxon>Gammaproteobacteria</taxon>
        <taxon>Legionellales</taxon>
        <taxon>Legionellaceae</taxon>
        <taxon>Legionella</taxon>
    </lineage>
</organism>